<evidence type="ECO:0000250" key="1">
    <source>
        <dbReference type="UniProtKB" id="Q9ZFV5"/>
    </source>
</evidence>
<evidence type="ECO:0000269" key="2">
    <source>
    </source>
</evidence>
<evidence type="ECO:0000303" key="3">
    <source>
    </source>
</evidence>
<evidence type="ECO:0000305" key="4"/>
<evidence type="ECO:0000305" key="5">
    <source>
    </source>
</evidence>
<evidence type="ECO:0007744" key="6">
    <source>
        <dbReference type="PDB" id="4AXO"/>
    </source>
</evidence>
<evidence type="ECO:0007829" key="7">
    <source>
        <dbReference type="PDB" id="4AXO"/>
    </source>
</evidence>
<organism>
    <name type="scientific">Clostridioides difficile (strain 630)</name>
    <name type="common">Peptoclostridium difficile</name>
    <dbReference type="NCBI Taxonomy" id="272563"/>
    <lineage>
        <taxon>Bacteria</taxon>
        <taxon>Bacillati</taxon>
        <taxon>Bacillota</taxon>
        <taxon>Clostridia</taxon>
        <taxon>Peptostreptococcales</taxon>
        <taxon>Peptostreptococcaceae</taxon>
        <taxon>Clostridioides</taxon>
    </lineage>
</organism>
<reference key="1">
    <citation type="journal article" date="2006" name="Nat. Genet.">
        <title>The multidrug-resistant human pathogen Clostridium difficile has a highly mobile, mosaic genome.</title>
        <authorList>
            <person name="Sebaihia M."/>
            <person name="Wren B.W."/>
            <person name="Mullany P."/>
            <person name="Fairweather N.F."/>
            <person name="Minton N."/>
            <person name="Stabler R."/>
            <person name="Thomson N.R."/>
            <person name="Roberts A.P."/>
            <person name="Cerdeno-Tarraga A.M."/>
            <person name="Wang H."/>
            <person name="Holden M.T.G."/>
            <person name="Wright A."/>
            <person name="Churcher C."/>
            <person name="Quail M.A."/>
            <person name="Baker S."/>
            <person name="Bason N."/>
            <person name="Brooks K."/>
            <person name="Chillingworth T."/>
            <person name="Cronin A."/>
            <person name="Davis P."/>
            <person name="Dowd L."/>
            <person name="Fraser A."/>
            <person name="Feltwell T."/>
            <person name="Hance Z."/>
            <person name="Holroyd S."/>
            <person name="Jagels K."/>
            <person name="Moule S."/>
            <person name="Mungall K."/>
            <person name="Price C."/>
            <person name="Rabbinowitsch E."/>
            <person name="Sharp S."/>
            <person name="Simmonds M."/>
            <person name="Stevens K."/>
            <person name="Unwin L."/>
            <person name="Whithead S."/>
            <person name="Dupuy B."/>
            <person name="Dougan G."/>
            <person name="Barrell B."/>
            <person name="Parkhill J."/>
        </authorList>
    </citation>
    <scope>NUCLEOTIDE SEQUENCE [LARGE SCALE GENOMIC DNA]</scope>
    <source>
        <strain>630</strain>
    </source>
</reference>
<reference evidence="6" key="2">
    <citation type="journal article" date="2012" name="PLoS ONE">
        <title>Structural insight into the Clostridium difficile ethanolamine utilisation microcompartment.</title>
        <authorList>
            <person name="Pitts A.C."/>
            <person name="Tuck L.R."/>
            <person name="Faulds-Pain A."/>
            <person name="Lewis R.J."/>
            <person name="Marles-Wright J."/>
        </authorList>
    </citation>
    <scope>X-RAY CRYSTALLOGRAPHY (1.00 ANGSTROMS) OF 17-157</scope>
    <scope>FUNCTION</scope>
    <scope>SUBUNIT</scope>
    <source>
        <strain>630</strain>
    </source>
</reference>
<proteinExistence type="evidence at protein level"/>
<comment type="function">
    <text evidence="1 2 5">A bidirectional acetate kinase that may drive flux through the ethanolamine (EA) degradation pathway under anoxic conditions found when this bacteria infects the host intestine. It may generate ATP that can be used by other enzymes (EutA and EutT) in the eut pathway. Might serve as an assembly hub for bacterial microcompartment (BMC) shell proteins (By similarity). Overexpression in E.coli leads to lamellar structures that inhibit cell division (PubMed:23144756). Expression of the eut operon may allow this bacteria to use EA as a carbon, nitrogen and energy source (Probable).</text>
</comment>
<comment type="catalytic activity">
    <reaction evidence="1">
        <text>acetate + ATP = acetyl phosphate + ADP</text>
        <dbReference type="Rhea" id="RHEA:11352"/>
        <dbReference type="ChEBI" id="CHEBI:22191"/>
        <dbReference type="ChEBI" id="CHEBI:30089"/>
        <dbReference type="ChEBI" id="CHEBI:30616"/>
        <dbReference type="ChEBI" id="CHEBI:456216"/>
        <dbReference type="EC" id="2.7.2.1"/>
    </reaction>
    <physiologicalReaction direction="left-to-right" evidence="1">
        <dbReference type="Rhea" id="RHEA:11353"/>
    </physiologicalReaction>
    <physiologicalReaction direction="right-to-left" evidence="1">
        <dbReference type="Rhea" id="RHEA:11354"/>
    </physiologicalReaction>
</comment>
<comment type="pathway">
    <text evidence="5">Amine and polyamine degradation; ethanolamine degradation.</text>
</comment>
<comment type="subunit">
    <text evidence="1 2">Homodimer (PubMed:23144756). May interact with EutM (By similarity).</text>
</comment>
<comment type="subcellular location">
    <subcellularLocation>
        <location evidence="5">Bacterial microcompartment</location>
    </subcellularLocation>
    <text evidence="1">May be found on the cytoplasmic face of the BMC.</text>
</comment>
<comment type="similarity">
    <text evidence="4">Belongs to the EutQ cupin-like family.</text>
</comment>
<sequence>MDISNIDKNLIETLVRQIIEEKISGTKDTVDFVRNKDISGITSIKLPTVKVSESDRLDTGNPSDVVYTKDLFTLEESPRLGCGMMEMKETTFDWTLNYDEIDYVIDGTLDIIIDGRKVSASSGELIFIPKGSKIQFSVPDYARFIYVTYPADWASQN</sequence>
<gene>
    <name type="primary">eutQ</name>
    <name type="synonym">CD1925</name>
    <name type="ordered locus">CD630_19250</name>
</gene>
<keyword id="KW-0002">3D-structure</keyword>
<keyword id="KW-1283">Bacterial microcompartment</keyword>
<keyword id="KW-0418">Kinase</keyword>
<keyword id="KW-1185">Reference proteome</keyword>
<keyword id="KW-0808">Transferase</keyword>
<protein>
    <recommendedName>
        <fullName>Acetate kinase EutQ</fullName>
        <ecNumber evidence="1">2.7.2.1</ecNumber>
    </recommendedName>
    <alternativeName>
        <fullName evidence="3">Ethanolamine utilization protein EutQ</fullName>
    </alternativeName>
</protein>
<name>EUTQ_CLOD6</name>
<accession>Q187N7</accession>
<dbReference type="EC" id="2.7.2.1" evidence="1"/>
<dbReference type="EMBL" id="AM180355">
    <property type="protein sequence ID" value="CAJ68801.1"/>
    <property type="molecule type" value="Genomic_DNA"/>
</dbReference>
<dbReference type="RefSeq" id="WP_009893336.1">
    <property type="nucleotide sequence ID" value="NZ_JAUPES010000023.1"/>
</dbReference>
<dbReference type="RefSeq" id="YP_001088432.1">
    <property type="nucleotide sequence ID" value="NC_009089.1"/>
</dbReference>
<dbReference type="PDB" id="4AXO">
    <property type="method" value="X-ray"/>
    <property type="resolution" value="1.00 A"/>
    <property type="chains" value="A/B=17-157"/>
</dbReference>
<dbReference type="PDBsum" id="4AXO"/>
<dbReference type="SMR" id="Q187N7"/>
<dbReference type="STRING" id="272563.CD630_19250"/>
<dbReference type="EnsemblBacteria" id="CAJ68801">
    <property type="protein sequence ID" value="CAJ68801"/>
    <property type="gene ID" value="CD630_19250"/>
</dbReference>
<dbReference type="KEGG" id="cdf:CD630_19250"/>
<dbReference type="KEGG" id="pdc:CDIF630_02129"/>
<dbReference type="PATRIC" id="fig|272563.120.peg.2021"/>
<dbReference type="eggNOG" id="COG4766">
    <property type="taxonomic scope" value="Bacteria"/>
</dbReference>
<dbReference type="OrthoDB" id="3828611at2"/>
<dbReference type="PhylomeDB" id="Q187N7"/>
<dbReference type="BioCyc" id="PDIF272563:G12WB-2069-MONOMER"/>
<dbReference type="UniPathway" id="UPA00560"/>
<dbReference type="EvolutionaryTrace" id="Q187N7"/>
<dbReference type="Proteomes" id="UP000001978">
    <property type="component" value="Chromosome"/>
</dbReference>
<dbReference type="GO" id="GO:0031469">
    <property type="term" value="C:bacterial microcompartment"/>
    <property type="evidence" value="ECO:0007669"/>
    <property type="project" value="UniProtKB-SubCell"/>
</dbReference>
<dbReference type="GO" id="GO:0008776">
    <property type="term" value="F:acetate kinase activity"/>
    <property type="evidence" value="ECO:0007669"/>
    <property type="project" value="UniProtKB-EC"/>
</dbReference>
<dbReference type="GO" id="GO:0046336">
    <property type="term" value="P:ethanolamine catabolic process"/>
    <property type="evidence" value="ECO:0007669"/>
    <property type="project" value="UniProtKB-UniPathway"/>
</dbReference>
<dbReference type="CDD" id="cd02228">
    <property type="entry name" value="cupin_EutQ"/>
    <property type="match status" value="1"/>
</dbReference>
<dbReference type="Gene3D" id="2.60.120.10">
    <property type="entry name" value="Jelly Rolls"/>
    <property type="match status" value="1"/>
</dbReference>
<dbReference type="InterPro" id="IPR010424">
    <property type="entry name" value="EutQ"/>
</dbReference>
<dbReference type="InterPro" id="IPR014710">
    <property type="entry name" value="RmlC-like_jellyroll"/>
</dbReference>
<dbReference type="InterPro" id="IPR011051">
    <property type="entry name" value="RmlC_Cupin_sf"/>
</dbReference>
<dbReference type="PANTHER" id="PTHR36169:SF1">
    <property type="entry name" value="ACETATE KINASE EUTQ"/>
    <property type="match status" value="1"/>
</dbReference>
<dbReference type="PANTHER" id="PTHR36169">
    <property type="entry name" value="ETHANOLAMINE UTILIZATION PROTEIN EUTQ"/>
    <property type="match status" value="1"/>
</dbReference>
<dbReference type="Pfam" id="PF06249">
    <property type="entry name" value="EutQ"/>
    <property type="match status" value="1"/>
</dbReference>
<dbReference type="SUPFAM" id="SSF51182">
    <property type="entry name" value="RmlC-like cupins"/>
    <property type="match status" value="1"/>
</dbReference>
<feature type="chain" id="PRO_0000452917" description="Acetate kinase EutQ">
    <location>
        <begin position="1"/>
        <end position="157"/>
    </location>
</feature>
<feature type="strand" evidence="7">
    <location>
        <begin position="30"/>
        <end position="32"/>
    </location>
</feature>
<feature type="strand" evidence="7">
    <location>
        <begin position="34"/>
        <end position="36"/>
    </location>
</feature>
<feature type="strand" evidence="7">
    <location>
        <begin position="42"/>
        <end position="44"/>
    </location>
</feature>
<feature type="helix" evidence="7">
    <location>
        <begin position="46"/>
        <end position="48"/>
    </location>
</feature>
<feature type="helix" evidence="7">
    <location>
        <begin position="53"/>
        <end position="55"/>
    </location>
</feature>
<feature type="strand" evidence="7">
    <location>
        <begin position="66"/>
        <end position="70"/>
    </location>
</feature>
<feature type="turn" evidence="7">
    <location>
        <begin position="74"/>
        <end position="76"/>
    </location>
</feature>
<feature type="strand" evidence="7">
    <location>
        <begin position="81"/>
        <end position="95"/>
    </location>
</feature>
<feature type="strand" evidence="7">
    <location>
        <begin position="97"/>
        <end position="113"/>
    </location>
</feature>
<feature type="strand" evidence="7">
    <location>
        <begin position="116"/>
        <end position="121"/>
    </location>
</feature>
<feature type="strand" evidence="7">
    <location>
        <begin position="125"/>
        <end position="128"/>
    </location>
</feature>
<feature type="strand" evidence="7">
    <location>
        <begin position="133"/>
        <end position="149"/>
    </location>
</feature>